<dbReference type="EC" id="2.1.1.182" evidence="1"/>
<dbReference type="EMBL" id="CP000058">
    <property type="protein sequence ID" value="AAZ35682.1"/>
    <property type="molecule type" value="Genomic_DNA"/>
</dbReference>
<dbReference type="RefSeq" id="WP_004660123.1">
    <property type="nucleotide sequence ID" value="NC_005773.3"/>
</dbReference>
<dbReference type="SMR" id="Q48NT7"/>
<dbReference type="GeneID" id="61872207"/>
<dbReference type="KEGG" id="psp:PSPPH_0633"/>
<dbReference type="eggNOG" id="COG0030">
    <property type="taxonomic scope" value="Bacteria"/>
</dbReference>
<dbReference type="HOGENOM" id="CLU_041220_0_1_6"/>
<dbReference type="Proteomes" id="UP000000551">
    <property type="component" value="Chromosome"/>
</dbReference>
<dbReference type="GO" id="GO:0005829">
    <property type="term" value="C:cytosol"/>
    <property type="evidence" value="ECO:0007669"/>
    <property type="project" value="TreeGrafter"/>
</dbReference>
<dbReference type="GO" id="GO:0052908">
    <property type="term" value="F:16S rRNA (adenine(1518)-N(6)/adenine(1519)-N(6))-dimethyltransferase activity"/>
    <property type="evidence" value="ECO:0007669"/>
    <property type="project" value="UniProtKB-EC"/>
</dbReference>
<dbReference type="GO" id="GO:0003723">
    <property type="term" value="F:RNA binding"/>
    <property type="evidence" value="ECO:0007669"/>
    <property type="project" value="UniProtKB-KW"/>
</dbReference>
<dbReference type="FunFam" id="1.10.8.100:FF:000001">
    <property type="entry name" value="Ribosomal RNA small subunit methyltransferase A"/>
    <property type="match status" value="1"/>
</dbReference>
<dbReference type="Gene3D" id="1.10.8.100">
    <property type="entry name" value="Ribosomal RNA adenine dimethylase-like, domain 2"/>
    <property type="match status" value="1"/>
</dbReference>
<dbReference type="Gene3D" id="3.40.50.150">
    <property type="entry name" value="Vaccinia Virus protein VP39"/>
    <property type="match status" value="1"/>
</dbReference>
<dbReference type="HAMAP" id="MF_00607">
    <property type="entry name" value="16SrRNA_methyltr_A"/>
    <property type="match status" value="1"/>
</dbReference>
<dbReference type="InterPro" id="IPR001737">
    <property type="entry name" value="KsgA/Erm"/>
</dbReference>
<dbReference type="InterPro" id="IPR023165">
    <property type="entry name" value="rRNA_Ade_diMease-like_C"/>
</dbReference>
<dbReference type="InterPro" id="IPR020596">
    <property type="entry name" value="rRNA_Ade_Mease_Trfase_CS"/>
</dbReference>
<dbReference type="InterPro" id="IPR020598">
    <property type="entry name" value="rRNA_Ade_methylase_Trfase_N"/>
</dbReference>
<dbReference type="InterPro" id="IPR011530">
    <property type="entry name" value="rRNA_adenine_dimethylase"/>
</dbReference>
<dbReference type="InterPro" id="IPR029063">
    <property type="entry name" value="SAM-dependent_MTases_sf"/>
</dbReference>
<dbReference type="NCBIfam" id="TIGR00755">
    <property type="entry name" value="ksgA"/>
    <property type="match status" value="1"/>
</dbReference>
<dbReference type="PANTHER" id="PTHR11727">
    <property type="entry name" value="DIMETHYLADENOSINE TRANSFERASE"/>
    <property type="match status" value="1"/>
</dbReference>
<dbReference type="PANTHER" id="PTHR11727:SF7">
    <property type="entry name" value="DIMETHYLADENOSINE TRANSFERASE-RELATED"/>
    <property type="match status" value="1"/>
</dbReference>
<dbReference type="Pfam" id="PF00398">
    <property type="entry name" value="RrnaAD"/>
    <property type="match status" value="1"/>
</dbReference>
<dbReference type="SMART" id="SM00650">
    <property type="entry name" value="rADc"/>
    <property type="match status" value="1"/>
</dbReference>
<dbReference type="SUPFAM" id="SSF53335">
    <property type="entry name" value="S-adenosyl-L-methionine-dependent methyltransferases"/>
    <property type="match status" value="1"/>
</dbReference>
<dbReference type="PROSITE" id="PS01131">
    <property type="entry name" value="RRNA_A_DIMETH"/>
    <property type="match status" value="1"/>
</dbReference>
<dbReference type="PROSITE" id="PS51689">
    <property type="entry name" value="SAM_RNA_A_N6_MT"/>
    <property type="match status" value="1"/>
</dbReference>
<accession>Q48NT7</accession>
<comment type="function">
    <text evidence="1">Specifically dimethylates two adjacent adenosines (A1518 and A1519) in the loop of a conserved hairpin near the 3'-end of 16S rRNA in the 30S particle. May play a critical role in biogenesis of 30S subunits.</text>
</comment>
<comment type="catalytic activity">
    <reaction evidence="1">
        <text>adenosine(1518)/adenosine(1519) in 16S rRNA + 4 S-adenosyl-L-methionine = N(6)-dimethyladenosine(1518)/N(6)-dimethyladenosine(1519) in 16S rRNA + 4 S-adenosyl-L-homocysteine + 4 H(+)</text>
        <dbReference type="Rhea" id="RHEA:19609"/>
        <dbReference type="Rhea" id="RHEA-COMP:10232"/>
        <dbReference type="Rhea" id="RHEA-COMP:10233"/>
        <dbReference type="ChEBI" id="CHEBI:15378"/>
        <dbReference type="ChEBI" id="CHEBI:57856"/>
        <dbReference type="ChEBI" id="CHEBI:59789"/>
        <dbReference type="ChEBI" id="CHEBI:74411"/>
        <dbReference type="ChEBI" id="CHEBI:74493"/>
        <dbReference type="EC" id="2.1.1.182"/>
    </reaction>
</comment>
<comment type="subcellular location">
    <subcellularLocation>
        <location evidence="1">Cytoplasm</location>
    </subcellularLocation>
</comment>
<comment type="similarity">
    <text evidence="1">Belongs to the class I-like SAM-binding methyltransferase superfamily. rRNA adenine N(6)-methyltransferase family. RsmA subfamily.</text>
</comment>
<gene>
    <name evidence="1" type="primary">rsmA</name>
    <name evidence="1" type="synonym">ksgA</name>
    <name type="ordered locus">PSPPH_0633</name>
</gene>
<keyword id="KW-0963">Cytoplasm</keyword>
<keyword id="KW-0489">Methyltransferase</keyword>
<keyword id="KW-0694">RNA-binding</keyword>
<keyword id="KW-0698">rRNA processing</keyword>
<keyword id="KW-0949">S-adenosyl-L-methionine</keyword>
<keyword id="KW-0808">Transferase</keyword>
<protein>
    <recommendedName>
        <fullName evidence="1">Ribosomal RNA small subunit methyltransferase A</fullName>
        <ecNumber evidence="1">2.1.1.182</ecNumber>
    </recommendedName>
    <alternativeName>
        <fullName evidence="1">16S rRNA (adenine(1518)-N(6)/adenine(1519)-N(6))-dimethyltransferase</fullName>
    </alternativeName>
    <alternativeName>
        <fullName evidence="1">16S rRNA dimethyladenosine transferase</fullName>
    </alternativeName>
    <alternativeName>
        <fullName evidence="1">16S rRNA dimethylase</fullName>
    </alternativeName>
    <alternativeName>
        <fullName evidence="1">S-adenosylmethionine-6-N', N'-adenosyl(rRNA) dimethyltransferase</fullName>
    </alternativeName>
</protein>
<evidence type="ECO:0000255" key="1">
    <source>
        <dbReference type="HAMAP-Rule" id="MF_00607"/>
    </source>
</evidence>
<organism>
    <name type="scientific">Pseudomonas savastanoi pv. phaseolicola (strain 1448A / Race 6)</name>
    <name type="common">Pseudomonas syringae pv. phaseolicola (strain 1448A / Race 6)</name>
    <dbReference type="NCBI Taxonomy" id="264730"/>
    <lineage>
        <taxon>Bacteria</taxon>
        <taxon>Pseudomonadati</taxon>
        <taxon>Pseudomonadota</taxon>
        <taxon>Gammaproteobacteria</taxon>
        <taxon>Pseudomonadales</taxon>
        <taxon>Pseudomonadaceae</taxon>
        <taxon>Pseudomonas</taxon>
    </lineage>
</organism>
<proteinExistence type="inferred from homology"/>
<name>RSMA_PSE14</name>
<feature type="chain" id="PRO_0000257321" description="Ribosomal RNA small subunit methyltransferase A">
    <location>
        <begin position="1"/>
        <end position="268"/>
    </location>
</feature>
<feature type="binding site" evidence="1">
    <location>
        <position position="16"/>
    </location>
    <ligand>
        <name>S-adenosyl-L-methionine</name>
        <dbReference type="ChEBI" id="CHEBI:59789"/>
    </ligand>
</feature>
<feature type="binding site" evidence="1">
    <location>
        <position position="18"/>
    </location>
    <ligand>
        <name>S-adenosyl-L-methionine</name>
        <dbReference type="ChEBI" id="CHEBI:59789"/>
    </ligand>
</feature>
<feature type="binding site" evidence="1">
    <location>
        <position position="43"/>
    </location>
    <ligand>
        <name>S-adenosyl-L-methionine</name>
        <dbReference type="ChEBI" id="CHEBI:59789"/>
    </ligand>
</feature>
<feature type="binding site" evidence="1">
    <location>
        <position position="64"/>
    </location>
    <ligand>
        <name>S-adenosyl-L-methionine</name>
        <dbReference type="ChEBI" id="CHEBI:59789"/>
    </ligand>
</feature>
<feature type="binding site" evidence="1">
    <location>
        <position position="89"/>
    </location>
    <ligand>
        <name>S-adenosyl-L-methionine</name>
        <dbReference type="ChEBI" id="CHEBI:59789"/>
    </ligand>
</feature>
<feature type="binding site" evidence="1">
    <location>
        <position position="110"/>
    </location>
    <ligand>
        <name>S-adenosyl-L-methionine</name>
        <dbReference type="ChEBI" id="CHEBI:59789"/>
    </ligand>
</feature>
<sequence>MTEQYQHRARKRFGQNFLHDAGVIDKILRAIRAKPEDRLLEIGPGQGALTEGLLNSGAQLDVVELDKDLIPILTGQFGNKPNFNLHQGDALKFDFNSLGAEPRSLRVVGNLPYNISTPLIFHLLQNASLIRDMHFMLQKEVVERMAAGPGGGDWGRLSIMVQYHCRVEHLFNVGPGAFNPPPKVDSAIVRLVPYETLPHPAKDHRVLERVVREAFNQRRKTLRNTLKLLLSSDEITASGVDGSLRPEQLDLAAFVRLADTLSEKVVTE</sequence>
<reference key="1">
    <citation type="journal article" date="2005" name="J. Bacteriol.">
        <title>Whole-genome sequence analysis of Pseudomonas syringae pv. phaseolicola 1448A reveals divergence among pathovars in genes involved in virulence and transposition.</title>
        <authorList>
            <person name="Joardar V."/>
            <person name="Lindeberg M."/>
            <person name="Jackson R.W."/>
            <person name="Selengut J."/>
            <person name="Dodson R."/>
            <person name="Brinkac L.M."/>
            <person name="Daugherty S.C."/>
            <person name="DeBoy R.T."/>
            <person name="Durkin A.S."/>
            <person name="Gwinn Giglio M."/>
            <person name="Madupu R."/>
            <person name="Nelson W.C."/>
            <person name="Rosovitz M.J."/>
            <person name="Sullivan S.A."/>
            <person name="Crabtree J."/>
            <person name="Creasy T."/>
            <person name="Davidsen T.M."/>
            <person name="Haft D.H."/>
            <person name="Zafar N."/>
            <person name="Zhou L."/>
            <person name="Halpin R."/>
            <person name="Holley T."/>
            <person name="Khouri H.M."/>
            <person name="Feldblyum T.V."/>
            <person name="White O."/>
            <person name="Fraser C.M."/>
            <person name="Chatterjee A.K."/>
            <person name="Cartinhour S."/>
            <person name="Schneider D."/>
            <person name="Mansfield J.W."/>
            <person name="Collmer A."/>
            <person name="Buell R."/>
        </authorList>
    </citation>
    <scope>NUCLEOTIDE SEQUENCE [LARGE SCALE GENOMIC DNA]</scope>
    <source>
        <strain>1448A / Race 6</strain>
    </source>
</reference>